<gene>
    <name evidence="1" type="primary">tsaD</name>
    <name type="synonym">gcp</name>
    <name type="ordered locus">BCG_3489c</name>
</gene>
<reference key="1">
    <citation type="journal article" date="2007" name="Proc. Natl. Acad. Sci. U.S.A.">
        <title>Genome plasticity of BCG and impact on vaccine efficacy.</title>
        <authorList>
            <person name="Brosch R."/>
            <person name="Gordon S.V."/>
            <person name="Garnier T."/>
            <person name="Eiglmeier K."/>
            <person name="Frigui W."/>
            <person name="Valenti P."/>
            <person name="Dos Santos S."/>
            <person name="Duthoy S."/>
            <person name="Lacroix C."/>
            <person name="Garcia-Pelayo C."/>
            <person name="Inwald J.K."/>
            <person name="Golby P."/>
            <person name="Garcia J.N."/>
            <person name="Hewinson R.G."/>
            <person name="Behr M.A."/>
            <person name="Quail M.A."/>
            <person name="Churcher C."/>
            <person name="Barrell B.G."/>
            <person name="Parkhill J."/>
            <person name="Cole S.T."/>
        </authorList>
    </citation>
    <scope>NUCLEOTIDE SEQUENCE [LARGE SCALE GENOMIC DNA]</scope>
    <source>
        <strain>BCG / Pasteur 1173P2</strain>
    </source>
</reference>
<organism>
    <name type="scientific">Mycobacterium bovis (strain BCG / Pasteur 1173P2)</name>
    <dbReference type="NCBI Taxonomy" id="410289"/>
    <lineage>
        <taxon>Bacteria</taxon>
        <taxon>Bacillati</taxon>
        <taxon>Actinomycetota</taxon>
        <taxon>Actinomycetes</taxon>
        <taxon>Mycobacteriales</taxon>
        <taxon>Mycobacteriaceae</taxon>
        <taxon>Mycobacterium</taxon>
        <taxon>Mycobacterium tuberculosis complex</taxon>
    </lineage>
</organism>
<dbReference type="EC" id="2.3.1.234" evidence="1"/>
<dbReference type="EMBL" id="AM408590">
    <property type="protein sequence ID" value="CAL73478.1"/>
    <property type="molecule type" value="Genomic_DNA"/>
</dbReference>
<dbReference type="RefSeq" id="WP_003900052.1">
    <property type="nucleotide sequence ID" value="NC_008769.1"/>
</dbReference>
<dbReference type="SMR" id="A1KPB0"/>
<dbReference type="KEGG" id="mbb:BCG_3489c"/>
<dbReference type="HOGENOM" id="CLU_023208_0_2_11"/>
<dbReference type="Proteomes" id="UP000001472">
    <property type="component" value="Chromosome"/>
</dbReference>
<dbReference type="GO" id="GO:0005737">
    <property type="term" value="C:cytoplasm"/>
    <property type="evidence" value="ECO:0007669"/>
    <property type="project" value="UniProtKB-SubCell"/>
</dbReference>
<dbReference type="GO" id="GO:0005506">
    <property type="term" value="F:iron ion binding"/>
    <property type="evidence" value="ECO:0007669"/>
    <property type="project" value="UniProtKB-UniRule"/>
</dbReference>
<dbReference type="GO" id="GO:0061711">
    <property type="term" value="F:N(6)-L-threonylcarbamoyladenine synthase activity"/>
    <property type="evidence" value="ECO:0007669"/>
    <property type="project" value="UniProtKB-EC"/>
</dbReference>
<dbReference type="GO" id="GO:0002949">
    <property type="term" value="P:tRNA threonylcarbamoyladenosine modification"/>
    <property type="evidence" value="ECO:0007669"/>
    <property type="project" value="UniProtKB-UniRule"/>
</dbReference>
<dbReference type="CDD" id="cd24133">
    <property type="entry name" value="ASKHA_NBD_TsaD_bac"/>
    <property type="match status" value="1"/>
</dbReference>
<dbReference type="FunFam" id="3.30.420.40:FF:000012">
    <property type="entry name" value="tRNA N6-adenosine threonylcarbamoyltransferase"/>
    <property type="match status" value="1"/>
</dbReference>
<dbReference type="FunFam" id="3.30.420.40:FF:000040">
    <property type="entry name" value="tRNA N6-adenosine threonylcarbamoyltransferase"/>
    <property type="match status" value="1"/>
</dbReference>
<dbReference type="Gene3D" id="3.30.420.40">
    <property type="match status" value="2"/>
</dbReference>
<dbReference type="HAMAP" id="MF_01445">
    <property type="entry name" value="TsaD"/>
    <property type="match status" value="1"/>
</dbReference>
<dbReference type="InterPro" id="IPR043129">
    <property type="entry name" value="ATPase_NBD"/>
</dbReference>
<dbReference type="InterPro" id="IPR000905">
    <property type="entry name" value="Gcp-like_dom"/>
</dbReference>
<dbReference type="InterPro" id="IPR017861">
    <property type="entry name" value="KAE1/TsaD"/>
</dbReference>
<dbReference type="InterPro" id="IPR017860">
    <property type="entry name" value="Peptidase_M22_CS"/>
</dbReference>
<dbReference type="InterPro" id="IPR022450">
    <property type="entry name" value="TsaD"/>
</dbReference>
<dbReference type="NCBIfam" id="TIGR00329">
    <property type="entry name" value="gcp_kae1"/>
    <property type="match status" value="1"/>
</dbReference>
<dbReference type="NCBIfam" id="TIGR03723">
    <property type="entry name" value="T6A_TsaD_YgjD"/>
    <property type="match status" value="1"/>
</dbReference>
<dbReference type="PANTHER" id="PTHR11735">
    <property type="entry name" value="TRNA N6-ADENOSINE THREONYLCARBAMOYLTRANSFERASE"/>
    <property type="match status" value="1"/>
</dbReference>
<dbReference type="PANTHER" id="PTHR11735:SF6">
    <property type="entry name" value="TRNA N6-ADENOSINE THREONYLCARBAMOYLTRANSFERASE, MITOCHONDRIAL"/>
    <property type="match status" value="1"/>
</dbReference>
<dbReference type="Pfam" id="PF00814">
    <property type="entry name" value="TsaD"/>
    <property type="match status" value="1"/>
</dbReference>
<dbReference type="PRINTS" id="PR00789">
    <property type="entry name" value="OSIALOPTASE"/>
</dbReference>
<dbReference type="SUPFAM" id="SSF53067">
    <property type="entry name" value="Actin-like ATPase domain"/>
    <property type="match status" value="2"/>
</dbReference>
<dbReference type="PROSITE" id="PS01016">
    <property type="entry name" value="GLYCOPROTEASE"/>
    <property type="match status" value="1"/>
</dbReference>
<proteinExistence type="inferred from homology"/>
<accession>A1KPB0</accession>
<protein>
    <recommendedName>
        <fullName evidence="1">tRNA N6-adenosine threonylcarbamoyltransferase</fullName>
        <ecNumber evidence="1">2.3.1.234</ecNumber>
    </recommendedName>
    <alternativeName>
        <fullName evidence="1">N6-L-threonylcarbamoyladenine synthase</fullName>
        <shortName evidence="1">t(6)A synthase</shortName>
    </alternativeName>
    <alternativeName>
        <fullName evidence="1">t(6)A37 threonylcarbamoyladenosine biosynthesis protein TsaD</fullName>
    </alternativeName>
    <alternativeName>
        <fullName evidence="1">tRNA threonylcarbamoyladenosine biosynthesis protein TsaD</fullName>
    </alternativeName>
</protein>
<evidence type="ECO:0000255" key="1">
    <source>
        <dbReference type="HAMAP-Rule" id="MF_01445"/>
    </source>
</evidence>
<evidence type="ECO:0000256" key="2">
    <source>
        <dbReference type="SAM" id="MobiDB-lite"/>
    </source>
</evidence>
<keyword id="KW-0012">Acyltransferase</keyword>
<keyword id="KW-0963">Cytoplasm</keyword>
<keyword id="KW-0408">Iron</keyword>
<keyword id="KW-0479">Metal-binding</keyword>
<keyword id="KW-0808">Transferase</keyword>
<keyword id="KW-0819">tRNA processing</keyword>
<sequence length="344" mass="35091">MTTVLGIETSCDETGVGIARLDPDGTVTLLADEVASSVDEHVRFGGVVPEIASRAHLEALGPAMRRALAAAGLKQPDIVAATIGPGLAGALLVGVAAAKAYSAAWGVPFYAVNHLGGHLAADVYEHGPLPECVALLVSGGHTHLLHVRSLGEPIIELGSTVDDAAGEAYDKVARLLGLGYPGGKALDDLARTGDRDAIVFPRGMSGPADDRYAFSFSGLKTAVARYVESHAADPGFRTADIAAGFQEAVADVLTMKAVRAATALGVSTLLIAGGVAANSRLRELATQRCGEAGRTLRIPSPRLCTDNGAMIAAFAAQLVAAGAPPSPLDVPSDPGLPVMQGQVR</sequence>
<name>TSAD_MYCBP</name>
<feature type="chain" id="PRO_0000303429" description="tRNA N6-adenosine threonylcarbamoyltransferase">
    <location>
        <begin position="1"/>
        <end position="344"/>
    </location>
</feature>
<feature type="region of interest" description="Disordered" evidence="2">
    <location>
        <begin position="325"/>
        <end position="344"/>
    </location>
</feature>
<feature type="binding site" evidence="1">
    <location>
        <position position="114"/>
    </location>
    <ligand>
        <name>Fe cation</name>
        <dbReference type="ChEBI" id="CHEBI:24875"/>
    </ligand>
</feature>
<feature type="binding site" evidence="1">
    <location>
        <position position="118"/>
    </location>
    <ligand>
        <name>Fe cation</name>
        <dbReference type="ChEBI" id="CHEBI:24875"/>
    </ligand>
</feature>
<feature type="binding site" evidence="1">
    <location>
        <begin position="136"/>
        <end position="140"/>
    </location>
    <ligand>
        <name>substrate</name>
    </ligand>
</feature>
<feature type="binding site" evidence="1">
    <location>
        <position position="170"/>
    </location>
    <ligand>
        <name>substrate</name>
    </ligand>
</feature>
<feature type="binding site" evidence="1">
    <location>
        <position position="183"/>
    </location>
    <ligand>
        <name>substrate</name>
    </ligand>
</feature>
<feature type="binding site" evidence="1">
    <location>
        <position position="187"/>
    </location>
    <ligand>
        <name>substrate</name>
    </ligand>
</feature>
<feature type="binding site" evidence="1">
    <location>
        <position position="278"/>
    </location>
    <ligand>
        <name>substrate</name>
    </ligand>
</feature>
<feature type="binding site" evidence="1">
    <location>
        <position position="306"/>
    </location>
    <ligand>
        <name>Fe cation</name>
        <dbReference type="ChEBI" id="CHEBI:24875"/>
    </ligand>
</feature>
<comment type="function">
    <text evidence="1">Required for the formation of a threonylcarbamoyl group on adenosine at position 37 (t(6)A37) in tRNAs that read codons beginning with adenine. Is involved in the transfer of the threonylcarbamoyl moiety of threonylcarbamoyl-AMP (TC-AMP) to the N6 group of A37, together with TsaE and TsaB. TsaD likely plays a direct catalytic role in this reaction.</text>
</comment>
<comment type="catalytic activity">
    <reaction evidence="1">
        <text>L-threonylcarbamoyladenylate + adenosine(37) in tRNA = N(6)-L-threonylcarbamoyladenosine(37) in tRNA + AMP + H(+)</text>
        <dbReference type="Rhea" id="RHEA:37059"/>
        <dbReference type="Rhea" id="RHEA-COMP:10162"/>
        <dbReference type="Rhea" id="RHEA-COMP:10163"/>
        <dbReference type="ChEBI" id="CHEBI:15378"/>
        <dbReference type="ChEBI" id="CHEBI:73682"/>
        <dbReference type="ChEBI" id="CHEBI:74411"/>
        <dbReference type="ChEBI" id="CHEBI:74418"/>
        <dbReference type="ChEBI" id="CHEBI:456215"/>
        <dbReference type="EC" id="2.3.1.234"/>
    </reaction>
</comment>
<comment type="cofactor">
    <cofactor evidence="1">
        <name>Fe(2+)</name>
        <dbReference type="ChEBI" id="CHEBI:29033"/>
    </cofactor>
    <text evidence="1">Binds 1 Fe(2+) ion per subunit.</text>
</comment>
<comment type="subcellular location">
    <subcellularLocation>
        <location evidence="1">Cytoplasm</location>
    </subcellularLocation>
</comment>
<comment type="similarity">
    <text evidence="1">Belongs to the KAE1 / TsaD family.</text>
</comment>